<evidence type="ECO:0000255" key="1">
    <source>
        <dbReference type="HAMAP-Rule" id="MF_01365"/>
    </source>
</evidence>
<evidence type="ECO:0000305" key="2"/>
<accession>A0JZ70</accession>
<comment type="function">
    <text evidence="1">This protein binds to the 23S rRNA, and is important in its secondary structure. It is located near the subunit interface in the base of the L7/L12 stalk, and near the tRNA binding site of the peptidyltransferase center.</text>
</comment>
<comment type="subunit">
    <text evidence="1">Part of the 50S ribosomal subunit.</text>
</comment>
<comment type="similarity">
    <text evidence="1">Belongs to the universal ribosomal protein uL6 family.</text>
</comment>
<feature type="chain" id="PRO_1000055193" description="Large ribosomal subunit protein uL6">
    <location>
        <begin position="1"/>
        <end position="178"/>
    </location>
</feature>
<proteinExistence type="inferred from homology"/>
<organism>
    <name type="scientific">Arthrobacter sp. (strain FB24)</name>
    <dbReference type="NCBI Taxonomy" id="290399"/>
    <lineage>
        <taxon>Bacteria</taxon>
        <taxon>Bacillati</taxon>
        <taxon>Actinomycetota</taxon>
        <taxon>Actinomycetes</taxon>
        <taxon>Micrococcales</taxon>
        <taxon>Micrococcaceae</taxon>
        <taxon>Arthrobacter</taxon>
    </lineage>
</organism>
<protein>
    <recommendedName>
        <fullName evidence="1">Large ribosomal subunit protein uL6</fullName>
    </recommendedName>
    <alternativeName>
        <fullName evidence="2">50S ribosomal protein L6</fullName>
    </alternativeName>
</protein>
<reference key="1">
    <citation type="journal article" date="2013" name="Stand. Genomic Sci.">
        <title>Complete genome sequence of Arthrobacter sp. strain FB24.</title>
        <authorList>
            <person name="Nakatsu C.H."/>
            <person name="Barabote R."/>
            <person name="Thompson S."/>
            <person name="Bruce D."/>
            <person name="Detter C."/>
            <person name="Brettin T."/>
            <person name="Han C."/>
            <person name="Beasley F."/>
            <person name="Chen W."/>
            <person name="Konopka A."/>
            <person name="Xie G."/>
        </authorList>
    </citation>
    <scope>NUCLEOTIDE SEQUENCE [LARGE SCALE GENOMIC DNA]</scope>
    <source>
        <strain>FB24</strain>
    </source>
</reference>
<sequence length="178" mass="18848">MSRIGRLPITVPAGVEVKVDGSVVSVKGSKGELSHTVASPIEVSLEDGTLTVARPNDERASRSLHGLTRTLIANMIQGVTAGYEKKLEIVGTGYRVQAKGSDLEFALGYSHPVNVSAPNGITFAVETPTKLSVSGISKQQVGEVAANIRKLRKPDPYKGKGIRYAGEVIRRKVGKAGK</sequence>
<dbReference type="EMBL" id="CP000454">
    <property type="protein sequence ID" value="ABK04340.1"/>
    <property type="molecule type" value="Genomic_DNA"/>
</dbReference>
<dbReference type="RefSeq" id="WP_011692797.1">
    <property type="nucleotide sequence ID" value="NC_008541.1"/>
</dbReference>
<dbReference type="SMR" id="A0JZ70"/>
<dbReference type="STRING" id="290399.Arth_2961"/>
<dbReference type="KEGG" id="art:Arth_2961"/>
<dbReference type="eggNOG" id="COG0097">
    <property type="taxonomic scope" value="Bacteria"/>
</dbReference>
<dbReference type="HOGENOM" id="CLU_065464_1_2_11"/>
<dbReference type="OrthoDB" id="9805007at2"/>
<dbReference type="Proteomes" id="UP000000754">
    <property type="component" value="Chromosome"/>
</dbReference>
<dbReference type="GO" id="GO:0022625">
    <property type="term" value="C:cytosolic large ribosomal subunit"/>
    <property type="evidence" value="ECO:0007669"/>
    <property type="project" value="TreeGrafter"/>
</dbReference>
<dbReference type="GO" id="GO:0019843">
    <property type="term" value="F:rRNA binding"/>
    <property type="evidence" value="ECO:0007669"/>
    <property type="project" value="UniProtKB-UniRule"/>
</dbReference>
<dbReference type="GO" id="GO:0003735">
    <property type="term" value="F:structural constituent of ribosome"/>
    <property type="evidence" value="ECO:0007669"/>
    <property type="project" value="InterPro"/>
</dbReference>
<dbReference type="GO" id="GO:0002181">
    <property type="term" value="P:cytoplasmic translation"/>
    <property type="evidence" value="ECO:0007669"/>
    <property type="project" value="TreeGrafter"/>
</dbReference>
<dbReference type="FunFam" id="3.90.930.12:FF:000001">
    <property type="entry name" value="50S ribosomal protein L6"/>
    <property type="match status" value="1"/>
</dbReference>
<dbReference type="FunFam" id="3.90.930.12:FF:000002">
    <property type="entry name" value="50S ribosomal protein L6"/>
    <property type="match status" value="1"/>
</dbReference>
<dbReference type="Gene3D" id="3.90.930.12">
    <property type="entry name" value="Ribosomal protein L6, alpha-beta domain"/>
    <property type="match status" value="2"/>
</dbReference>
<dbReference type="HAMAP" id="MF_01365_B">
    <property type="entry name" value="Ribosomal_uL6_B"/>
    <property type="match status" value="1"/>
</dbReference>
<dbReference type="InterPro" id="IPR000702">
    <property type="entry name" value="Ribosomal_uL6-like"/>
</dbReference>
<dbReference type="InterPro" id="IPR036789">
    <property type="entry name" value="Ribosomal_uL6-like_a/b-dom_sf"/>
</dbReference>
<dbReference type="InterPro" id="IPR020040">
    <property type="entry name" value="Ribosomal_uL6_a/b-dom"/>
</dbReference>
<dbReference type="InterPro" id="IPR019906">
    <property type="entry name" value="Ribosomal_uL6_bac-type"/>
</dbReference>
<dbReference type="InterPro" id="IPR002358">
    <property type="entry name" value="Ribosomal_uL6_CS"/>
</dbReference>
<dbReference type="NCBIfam" id="TIGR03654">
    <property type="entry name" value="L6_bact"/>
    <property type="match status" value="1"/>
</dbReference>
<dbReference type="PANTHER" id="PTHR11655">
    <property type="entry name" value="60S/50S RIBOSOMAL PROTEIN L6/L9"/>
    <property type="match status" value="1"/>
</dbReference>
<dbReference type="PANTHER" id="PTHR11655:SF14">
    <property type="entry name" value="LARGE RIBOSOMAL SUBUNIT PROTEIN UL6M"/>
    <property type="match status" value="1"/>
</dbReference>
<dbReference type="Pfam" id="PF00347">
    <property type="entry name" value="Ribosomal_L6"/>
    <property type="match status" value="2"/>
</dbReference>
<dbReference type="PIRSF" id="PIRSF002162">
    <property type="entry name" value="Ribosomal_L6"/>
    <property type="match status" value="1"/>
</dbReference>
<dbReference type="PRINTS" id="PR00059">
    <property type="entry name" value="RIBOSOMALL6"/>
</dbReference>
<dbReference type="SUPFAM" id="SSF56053">
    <property type="entry name" value="Ribosomal protein L6"/>
    <property type="match status" value="2"/>
</dbReference>
<dbReference type="PROSITE" id="PS00525">
    <property type="entry name" value="RIBOSOMAL_L6_1"/>
    <property type="match status" value="1"/>
</dbReference>
<name>RL6_ARTS2</name>
<gene>
    <name evidence="1" type="primary">rplF</name>
    <name type="ordered locus">Arth_2961</name>
</gene>
<keyword id="KW-1185">Reference proteome</keyword>
<keyword id="KW-0687">Ribonucleoprotein</keyword>
<keyword id="KW-0689">Ribosomal protein</keyword>
<keyword id="KW-0694">RNA-binding</keyword>
<keyword id="KW-0699">rRNA-binding</keyword>